<comment type="function">
    <text evidence="4 5 6">Plays a positive role in the effector-triggered immunity (ETI) response (PubMed:19199050, PubMed:24006883). Involved in salicylic acid (SA)-mediated processes occurring in ETI response, but is not involved in the autophagy process (PubMed:24006883). Promotes systemic rather than local immunity (PubMed:24755512). Essential for systemic acquired resistance (SAR), but not necessary for immune signaling downstream of SA (PubMed:24755512). May act in parallel with SA (PubMed:24755512).</text>
</comment>
<comment type="subcellular location">
    <subcellularLocation>
        <location evidence="5 6">Secreted</location>
        <location evidence="5 6">Extracellular space</location>
        <location evidence="5 6">Apoplast</location>
    </subcellularLocation>
    <subcellularLocation>
        <location evidence="5">Cell membrane</location>
    </subcellularLocation>
    <text evidence="5">Tightly bound to the apoplastic side of the plasma membrane.</text>
</comment>
<comment type="tissue specificity">
    <text evidence="5">Expressed in seedlings and leaves of adult plants.</text>
</comment>
<comment type="induction">
    <text evidence="3 4 5 6">Strongly induced locally by salicylic acid (SA) (PubMed:17496105, PubMed:24755512). Completely dependent on NPR1 for early up-regulation by SA (PubMed:19199050). Up-regulated upon avirulent pathogen infection via an SA-mediated pathway (PubMed:19199050, PubMed:24006883). Up-regulated locally and systematically during systemic acquired resistance (SAR) (PubMed:24755512). The local induction is independent of EDS1 while the systemic transcriptional regulation is EDS1-dependent (PubMed:24755512).</text>
</comment>
<comment type="similarity">
    <text evidence="10">Belongs to the leguminous lectin family.</text>
</comment>
<accession>Q9LZF5</accession>
<accession>Q84R25</accession>
<reference key="1">
    <citation type="journal article" date="2000" name="Nature">
        <title>Sequence and analysis of chromosome 5 of the plant Arabidopsis thaliana.</title>
        <authorList>
            <person name="Tabata S."/>
            <person name="Kaneko T."/>
            <person name="Nakamura Y."/>
            <person name="Kotani H."/>
            <person name="Kato T."/>
            <person name="Asamizu E."/>
            <person name="Miyajima N."/>
            <person name="Sasamoto S."/>
            <person name="Kimura T."/>
            <person name="Hosouchi T."/>
            <person name="Kawashima K."/>
            <person name="Kohara M."/>
            <person name="Matsumoto M."/>
            <person name="Matsuno A."/>
            <person name="Muraki A."/>
            <person name="Nakayama S."/>
            <person name="Nakazaki N."/>
            <person name="Naruo K."/>
            <person name="Okumura S."/>
            <person name="Shinpo S."/>
            <person name="Takeuchi C."/>
            <person name="Wada T."/>
            <person name="Watanabe A."/>
            <person name="Yamada M."/>
            <person name="Yasuda M."/>
            <person name="Sato S."/>
            <person name="de la Bastide M."/>
            <person name="Huang E."/>
            <person name="Spiegel L."/>
            <person name="Gnoj L."/>
            <person name="O'Shaughnessy A."/>
            <person name="Preston R."/>
            <person name="Habermann K."/>
            <person name="Murray J."/>
            <person name="Johnson D."/>
            <person name="Rohlfing T."/>
            <person name="Nelson J."/>
            <person name="Stoneking T."/>
            <person name="Pepin K."/>
            <person name="Spieth J."/>
            <person name="Sekhon M."/>
            <person name="Armstrong J."/>
            <person name="Becker M."/>
            <person name="Belter E."/>
            <person name="Cordum H."/>
            <person name="Cordes M."/>
            <person name="Courtney L."/>
            <person name="Courtney W."/>
            <person name="Dante M."/>
            <person name="Du H."/>
            <person name="Edwards J."/>
            <person name="Fryman J."/>
            <person name="Haakensen B."/>
            <person name="Lamar E."/>
            <person name="Latreille P."/>
            <person name="Leonard S."/>
            <person name="Meyer R."/>
            <person name="Mulvaney E."/>
            <person name="Ozersky P."/>
            <person name="Riley A."/>
            <person name="Strowmatt C."/>
            <person name="Wagner-McPherson C."/>
            <person name="Wollam A."/>
            <person name="Yoakum M."/>
            <person name="Bell M."/>
            <person name="Dedhia N."/>
            <person name="Parnell L."/>
            <person name="Shah R."/>
            <person name="Rodriguez M."/>
            <person name="Hoon See L."/>
            <person name="Vil D."/>
            <person name="Baker J."/>
            <person name="Kirchoff K."/>
            <person name="Toth K."/>
            <person name="King L."/>
            <person name="Bahret A."/>
            <person name="Miller B."/>
            <person name="Marra M.A."/>
            <person name="Martienssen R."/>
            <person name="McCombie W.R."/>
            <person name="Wilson R.K."/>
            <person name="Murphy G."/>
            <person name="Bancroft I."/>
            <person name="Volckaert G."/>
            <person name="Wambutt R."/>
            <person name="Duesterhoeft A."/>
            <person name="Stiekema W."/>
            <person name="Pohl T."/>
            <person name="Entian K.-D."/>
            <person name="Terryn N."/>
            <person name="Hartley N."/>
            <person name="Bent E."/>
            <person name="Johnson S."/>
            <person name="Langham S.-A."/>
            <person name="McCullagh B."/>
            <person name="Robben J."/>
            <person name="Grymonprez B."/>
            <person name="Zimmermann W."/>
            <person name="Ramsperger U."/>
            <person name="Wedler H."/>
            <person name="Balke K."/>
            <person name="Wedler E."/>
            <person name="Peters S."/>
            <person name="van Staveren M."/>
            <person name="Dirkse W."/>
            <person name="Mooijman P."/>
            <person name="Klein Lankhorst R."/>
            <person name="Weitzenegger T."/>
            <person name="Bothe G."/>
            <person name="Rose M."/>
            <person name="Hauf J."/>
            <person name="Berneiser S."/>
            <person name="Hempel S."/>
            <person name="Feldpausch M."/>
            <person name="Lamberth S."/>
            <person name="Villarroel R."/>
            <person name="Gielen J."/>
            <person name="Ardiles W."/>
            <person name="Bents O."/>
            <person name="Lemcke K."/>
            <person name="Kolesov G."/>
            <person name="Mayer K.F.X."/>
            <person name="Rudd S."/>
            <person name="Schoof H."/>
            <person name="Schueller C."/>
            <person name="Zaccaria P."/>
            <person name="Mewes H.-W."/>
            <person name="Bevan M."/>
            <person name="Fransz P.F."/>
        </authorList>
    </citation>
    <scope>NUCLEOTIDE SEQUENCE [LARGE SCALE GENOMIC DNA]</scope>
    <source>
        <strain>cv. Columbia</strain>
    </source>
</reference>
<reference key="2">
    <citation type="journal article" date="2017" name="Plant J.">
        <title>Araport11: a complete reannotation of the Arabidopsis thaliana reference genome.</title>
        <authorList>
            <person name="Cheng C.Y."/>
            <person name="Krishnakumar V."/>
            <person name="Chan A.P."/>
            <person name="Thibaud-Nissen F."/>
            <person name="Schobel S."/>
            <person name="Town C.D."/>
        </authorList>
    </citation>
    <scope>GENOME REANNOTATION</scope>
    <source>
        <strain>cv. Columbia</strain>
    </source>
</reference>
<reference key="3">
    <citation type="journal article" date="2003" name="Science">
        <title>Empirical analysis of transcriptional activity in the Arabidopsis genome.</title>
        <authorList>
            <person name="Yamada K."/>
            <person name="Lim J."/>
            <person name="Dale J.M."/>
            <person name="Chen H."/>
            <person name="Shinn P."/>
            <person name="Palm C.J."/>
            <person name="Southwick A.M."/>
            <person name="Wu H.C."/>
            <person name="Kim C.J."/>
            <person name="Nguyen M."/>
            <person name="Pham P.K."/>
            <person name="Cheuk R.F."/>
            <person name="Karlin-Newmann G."/>
            <person name="Liu S.X."/>
            <person name="Lam B."/>
            <person name="Sakano H."/>
            <person name="Wu T."/>
            <person name="Yu G."/>
            <person name="Miranda M."/>
            <person name="Quach H.L."/>
            <person name="Tripp M."/>
            <person name="Chang C.H."/>
            <person name="Lee J.M."/>
            <person name="Toriumi M.J."/>
            <person name="Chan M.M."/>
            <person name="Tang C.C."/>
            <person name="Onodera C.S."/>
            <person name="Deng J.M."/>
            <person name="Akiyama K."/>
            <person name="Ansari Y."/>
            <person name="Arakawa T."/>
            <person name="Banh J."/>
            <person name="Banno F."/>
            <person name="Bowser L."/>
            <person name="Brooks S.Y."/>
            <person name="Carninci P."/>
            <person name="Chao Q."/>
            <person name="Choy N."/>
            <person name="Enju A."/>
            <person name="Goldsmith A.D."/>
            <person name="Gurjal M."/>
            <person name="Hansen N.F."/>
            <person name="Hayashizaki Y."/>
            <person name="Johnson-Hopson C."/>
            <person name="Hsuan V.W."/>
            <person name="Iida K."/>
            <person name="Karnes M."/>
            <person name="Khan S."/>
            <person name="Koesema E."/>
            <person name="Ishida J."/>
            <person name="Jiang P.X."/>
            <person name="Jones T."/>
            <person name="Kawai J."/>
            <person name="Kamiya A."/>
            <person name="Meyers C."/>
            <person name="Nakajima M."/>
            <person name="Narusaka M."/>
            <person name="Seki M."/>
            <person name="Sakurai T."/>
            <person name="Satou M."/>
            <person name="Tamse R."/>
            <person name="Vaysberg M."/>
            <person name="Wallender E.K."/>
            <person name="Wong C."/>
            <person name="Yamamura Y."/>
            <person name="Yuan S."/>
            <person name="Shinozaki K."/>
            <person name="Davis R.W."/>
            <person name="Theologis A."/>
            <person name="Ecker J.R."/>
        </authorList>
    </citation>
    <scope>NUCLEOTIDE SEQUENCE [LARGE SCALE MRNA]</scope>
    <source>
        <strain>cv. Columbia</strain>
    </source>
</reference>
<reference key="4">
    <citation type="submission" date="2006-07" db="EMBL/GenBank/DDBJ databases">
        <title>Large-scale analysis of RIKEN Arabidopsis full-length (RAFL) cDNAs.</title>
        <authorList>
            <person name="Totoki Y."/>
            <person name="Seki M."/>
            <person name="Ishida J."/>
            <person name="Nakajima M."/>
            <person name="Enju A."/>
            <person name="Kamiya A."/>
            <person name="Narusaka M."/>
            <person name="Shin-i T."/>
            <person name="Nakagawa M."/>
            <person name="Sakamoto N."/>
            <person name="Oishi K."/>
            <person name="Kohara Y."/>
            <person name="Kobayashi M."/>
            <person name="Toyoda A."/>
            <person name="Sakaki Y."/>
            <person name="Sakurai T."/>
            <person name="Iida K."/>
            <person name="Akiyama K."/>
            <person name="Satou M."/>
            <person name="Toyoda T."/>
            <person name="Konagaya A."/>
            <person name="Carninci P."/>
            <person name="Kawai J."/>
            <person name="Hayashizaki Y."/>
            <person name="Shinozaki K."/>
        </authorList>
    </citation>
    <scope>NUCLEOTIDE SEQUENCE [LARGE SCALE MRNA]</scope>
    <source>
        <strain>cv. Columbia</strain>
    </source>
</reference>
<reference key="5">
    <citation type="submission" date="2004-09" db="EMBL/GenBank/DDBJ databases">
        <title>Arabidopsis ORF clones.</title>
        <authorList>
            <person name="Cheuk R.F."/>
            <person name="Chen H."/>
            <person name="Kim C.J."/>
            <person name="Shinn P."/>
            <person name="Ecker J.R."/>
        </authorList>
    </citation>
    <scope>NUCLEOTIDE SEQUENCE [LARGE SCALE MRNA]</scope>
    <source>
        <strain>cv. Columbia</strain>
    </source>
</reference>
<reference key="6">
    <citation type="journal article" date="2007" name="Plant Physiol.">
        <title>Phosphatidylinositol 4-kinase activation is an early response to salicylic acid in Arabidopsis suspension cells.</title>
        <authorList>
            <person name="Krinke O."/>
            <person name="Ruelland E."/>
            <person name="Valentova O."/>
            <person name="Vergnolle C."/>
            <person name="Renou J.P."/>
            <person name="Taconnat L."/>
            <person name="Flemr M."/>
            <person name="Burketova L."/>
            <person name="Zachowski A."/>
        </authorList>
    </citation>
    <scope>INDUCTION BY SALICYLIC ACID</scope>
</reference>
<reference key="7">
    <citation type="journal article" date="2009" name="Plant Mol. Biol.">
        <title>Early genomic responses to salicylic acid in Arabidopsis.</title>
        <authorList>
            <person name="Blanco F."/>
            <person name="Salinas P."/>
            <person name="Cecchini N.M."/>
            <person name="Jordana X."/>
            <person name="Van Hummelen P."/>
            <person name="Alvarez M.E."/>
            <person name="Holuigue L."/>
        </authorList>
    </citation>
    <scope>FUNCTION</scope>
    <scope>INDUCTION BY SALICYLIC ACID AND PATHOGEN</scope>
</reference>
<reference key="8">
    <citation type="journal article" date="2012" name="J. Proteome Res.">
        <title>Identification of phosphoproteins in Arabidopsis thaliana leaves using polyethylene glycol fractionation, immobilized metal-ion affinity chromatography, two-dimensional gel electrophoresis and mass spectrometry.</title>
        <authorList>
            <person name="Aryal U.K."/>
            <person name="Krochko J.E."/>
            <person name="Ross A.R."/>
        </authorList>
    </citation>
    <scope>PHOSPHORYLATION [LARGE SCALE ANALYSIS] AT SER-238</scope>
    <scope>IDENTIFICATION BY MASS SPECTROMETRY [LARGE SCALE ANALYSIS]</scope>
</reference>
<reference key="9">
    <citation type="journal article" date="2013" name="Mol. Plant Microbe Interact.">
        <title>A salicylic acid-induced lectin-like protein plays a positive role in the effector-triggered immunity response of Arabidopsis thaliana to Pseudomonas syringae Avr-Rpm1.</title>
        <authorList>
            <person name="Armijo G."/>
            <person name="Salinas P."/>
            <person name="Monteoliva M.I."/>
            <person name="Seguel A."/>
            <person name="Garcia C."/>
            <person name="Villarroel-Candia E."/>
            <person name="Song W."/>
            <person name="van der Krol A.R."/>
            <person name="Alvarez M.E."/>
            <person name="Holuigue L."/>
        </authorList>
    </citation>
    <scope>FUNCTION</scope>
    <scope>TISSUE SPECIFICITY</scope>
    <scope>SUBCELLULAR LOCATION</scope>
    <scope>INDUCTION BY SALICYLIC ACID AND PATHOGEN</scope>
    <scope>GLYCOSYLATION AT ASN-129</scope>
</reference>
<reference key="10">
    <citation type="journal article" date="2014" name="Plant Physiol.">
        <title>Contrasting roles of the apoplastic aspartyl protease APOPLASTIC, ENHANCED DISEASE SUSCEPTIBILITY1-DEPENDENT1 and LEGUME LECTIN-LIKE PROTEIN1 in Arabidopsis systemic acquired resistance.</title>
        <authorList>
            <person name="Breitenbach H.H."/>
            <person name="Wenig M."/>
            <person name="Wittek F."/>
            <person name="Jorda L."/>
            <person name="Maldonado-Alconada A.M."/>
            <person name="Sarioglu H."/>
            <person name="Colby T."/>
            <person name="Knappe C."/>
            <person name="Bichlmeier M."/>
            <person name="Pabst E."/>
            <person name="Mackey D."/>
            <person name="Parker J.E."/>
            <person name="Vlot A.C."/>
        </authorList>
    </citation>
    <scope>FUNCTION</scope>
    <scope>INDUCTION</scope>
    <scope>SUBCELLULAR LOCATION</scope>
</reference>
<evidence type="ECO:0000255" key="1"/>
<evidence type="ECO:0000256" key="2">
    <source>
        <dbReference type="SAM" id="MobiDB-lite"/>
    </source>
</evidence>
<evidence type="ECO:0000269" key="3">
    <source>
    </source>
</evidence>
<evidence type="ECO:0000269" key="4">
    <source>
    </source>
</evidence>
<evidence type="ECO:0000269" key="5">
    <source>
    </source>
</evidence>
<evidence type="ECO:0000269" key="6">
    <source>
    </source>
</evidence>
<evidence type="ECO:0000303" key="7">
    <source>
    </source>
</evidence>
<evidence type="ECO:0000303" key="8">
    <source>
    </source>
</evidence>
<evidence type="ECO:0000303" key="9">
    <source>
    </source>
</evidence>
<evidence type="ECO:0000305" key="10"/>
<evidence type="ECO:0000312" key="11">
    <source>
        <dbReference type="Araport" id="AT5G03350"/>
    </source>
</evidence>
<evidence type="ECO:0000312" key="12">
    <source>
        <dbReference type="EMBL" id="CAB83291.1"/>
    </source>
</evidence>
<evidence type="ECO:0007744" key="13">
    <source>
    </source>
</evidence>
<proteinExistence type="evidence at protein level"/>
<gene>
    <name evidence="7" type="primary">LLP</name>
    <name evidence="9" type="synonym">AED9</name>
    <name evidence="8" type="synonym">LLP1</name>
    <name evidence="8" type="synonym">SAI-LLP1</name>
    <name evidence="11" type="ordered locus">At5g03350</name>
    <name evidence="12" type="ORF">F12E4.80</name>
</gene>
<organism>
    <name type="scientific">Arabidopsis thaliana</name>
    <name type="common">Mouse-ear cress</name>
    <dbReference type="NCBI Taxonomy" id="3702"/>
    <lineage>
        <taxon>Eukaryota</taxon>
        <taxon>Viridiplantae</taxon>
        <taxon>Streptophyta</taxon>
        <taxon>Embryophyta</taxon>
        <taxon>Tracheophyta</taxon>
        <taxon>Spermatophyta</taxon>
        <taxon>Magnoliopsida</taxon>
        <taxon>eudicotyledons</taxon>
        <taxon>Gunneridae</taxon>
        <taxon>Pentapetalae</taxon>
        <taxon>rosids</taxon>
        <taxon>malvids</taxon>
        <taxon>Brassicales</taxon>
        <taxon>Brassicaceae</taxon>
        <taxon>Camelineae</taxon>
        <taxon>Arabidopsis</taxon>
    </lineage>
</organism>
<protein>
    <recommendedName>
        <fullName evidence="7">Lectin-like protein</fullName>
    </recommendedName>
    <alternativeName>
        <fullName evidence="9">Apoplastic EDS1-dependent protein 9</fullName>
    </alternativeName>
    <alternativeName>
        <fullName evidence="8">SA-induced legume lectin-like protein 1</fullName>
    </alternativeName>
</protein>
<keyword id="KW-0052">Apoplast</keyword>
<keyword id="KW-1003">Cell membrane</keyword>
<keyword id="KW-0325">Glycoprotein</keyword>
<keyword id="KW-0418">Kinase</keyword>
<keyword id="KW-0430">Lectin</keyword>
<keyword id="KW-0472">Membrane</keyword>
<keyword id="KW-0597">Phosphoprotein</keyword>
<keyword id="KW-1185">Reference proteome</keyword>
<keyword id="KW-0964">Secreted</keyword>
<keyword id="KW-0732">Signal</keyword>
<keyword id="KW-0808">Transferase</keyword>
<sequence length="274" mass="30162">MKIHKLCFLALLLAHTTSAVNLNLNLKTSELVFLGDAELGPASDGVSRSGALSMTRDENPFSHGQSLWSTPVPFKPSSNSSSPYPFETSFTFSISTRIKPAPGHGLAFVVVPSIESDGPGPAGYLGIFNKTNNGNPKNHIFAVEFDVFQDKGFGDINDNHVGININSVTSVVAEKAGYWVQTGIGKMKHWSFKEFKLSNGERYKAWIEYRNSKVTVTLAPETVKKPKKPLIVAHLDLSKVFLQNMYPGFSGAMGRGVERHDIWSWTFQNSAKRI</sequence>
<feature type="signal peptide" evidence="1">
    <location>
        <begin position="1"/>
        <end position="19"/>
    </location>
</feature>
<feature type="chain" id="PRO_0000428922" description="Lectin-like protein">
    <location>
        <begin position="20"/>
        <end position="274"/>
    </location>
</feature>
<feature type="region of interest" description="Legume-lectin like">
    <location>
        <begin position="28"/>
        <end position="268"/>
    </location>
</feature>
<feature type="region of interest" description="Disordered" evidence="2">
    <location>
        <begin position="62"/>
        <end position="81"/>
    </location>
</feature>
<feature type="modified residue" description="Phosphoserine" evidence="13">
    <location>
        <position position="238"/>
    </location>
</feature>
<feature type="glycosylation site" description="N-linked (GlcNAc...) asparagine" evidence="5">
    <location>
        <position position="129"/>
    </location>
</feature>
<feature type="sequence conflict" description="In Ref. 3; AAP04126 and 4; BAF01527." evidence="10" ref="3 4">
    <original>K</original>
    <variation>I</variation>
    <location>
        <position position="137"/>
    </location>
</feature>
<name>LECT6_ARATH</name>
<dbReference type="EMBL" id="AL162751">
    <property type="protein sequence ID" value="CAB83291.1"/>
    <property type="molecule type" value="Genomic_DNA"/>
</dbReference>
<dbReference type="EMBL" id="CP002688">
    <property type="protein sequence ID" value="AED90590.1"/>
    <property type="molecule type" value="Genomic_DNA"/>
</dbReference>
<dbReference type="EMBL" id="BT006141">
    <property type="protein sequence ID" value="AAP04126.1"/>
    <property type="molecule type" value="mRNA"/>
</dbReference>
<dbReference type="EMBL" id="AK229686">
    <property type="protein sequence ID" value="BAF01527.1"/>
    <property type="molecule type" value="mRNA"/>
</dbReference>
<dbReference type="EMBL" id="BT015683">
    <property type="protein sequence ID" value="AAU15182.1"/>
    <property type="molecule type" value="mRNA"/>
</dbReference>
<dbReference type="PIR" id="T48356">
    <property type="entry name" value="T48356"/>
</dbReference>
<dbReference type="RefSeq" id="NP_195955.1">
    <property type="nucleotide sequence ID" value="NM_120414.4"/>
</dbReference>
<dbReference type="SMR" id="Q9LZF5"/>
<dbReference type="BioGRID" id="17139">
    <property type="interactions" value="1"/>
</dbReference>
<dbReference type="FunCoup" id="Q9LZF5">
    <property type="interactions" value="2"/>
</dbReference>
<dbReference type="STRING" id="3702.Q9LZF5"/>
<dbReference type="GlyCosmos" id="Q9LZF5">
    <property type="glycosylation" value="1 site, No reported glycans"/>
</dbReference>
<dbReference type="GlyGen" id="Q9LZF5">
    <property type="glycosylation" value="1 site"/>
</dbReference>
<dbReference type="iPTMnet" id="Q9LZF5"/>
<dbReference type="PaxDb" id="3702-AT5G03350.1"/>
<dbReference type="ProteomicsDB" id="238413"/>
<dbReference type="EnsemblPlants" id="AT5G03350.1">
    <property type="protein sequence ID" value="AT5G03350.1"/>
    <property type="gene ID" value="AT5G03350"/>
</dbReference>
<dbReference type="GeneID" id="831863"/>
<dbReference type="Gramene" id="AT5G03350.1">
    <property type="protein sequence ID" value="AT5G03350.1"/>
    <property type="gene ID" value="AT5G03350"/>
</dbReference>
<dbReference type="KEGG" id="ath:AT5G03350"/>
<dbReference type="Araport" id="AT5G03350"/>
<dbReference type="TAIR" id="AT5G03350">
    <property type="gene designation" value="SAI-LLP1"/>
</dbReference>
<dbReference type="eggNOG" id="ENOG502QRZ3">
    <property type="taxonomic scope" value="Eukaryota"/>
</dbReference>
<dbReference type="HOGENOM" id="CLU_000288_62_2_1"/>
<dbReference type="InParanoid" id="Q9LZF5"/>
<dbReference type="OMA" id="DAKNHVF"/>
<dbReference type="PhylomeDB" id="Q9LZF5"/>
<dbReference type="CD-CODE" id="4299E36E">
    <property type="entry name" value="Nucleolus"/>
</dbReference>
<dbReference type="PRO" id="PR:Q9LZF5"/>
<dbReference type="Proteomes" id="UP000006548">
    <property type="component" value="Chromosome 5"/>
</dbReference>
<dbReference type="ExpressionAtlas" id="Q9LZF5">
    <property type="expression patterns" value="baseline and differential"/>
</dbReference>
<dbReference type="GO" id="GO:0048046">
    <property type="term" value="C:apoplast"/>
    <property type="evidence" value="ECO:0007005"/>
    <property type="project" value="TAIR"/>
</dbReference>
<dbReference type="GO" id="GO:0005886">
    <property type="term" value="C:plasma membrane"/>
    <property type="evidence" value="ECO:0000314"/>
    <property type="project" value="TAIR"/>
</dbReference>
<dbReference type="GO" id="GO:0030246">
    <property type="term" value="F:carbohydrate binding"/>
    <property type="evidence" value="ECO:0007669"/>
    <property type="project" value="UniProtKB-KW"/>
</dbReference>
<dbReference type="GO" id="GO:0016301">
    <property type="term" value="F:kinase activity"/>
    <property type="evidence" value="ECO:0007669"/>
    <property type="project" value="UniProtKB-KW"/>
</dbReference>
<dbReference type="GO" id="GO:0071446">
    <property type="term" value="P:cellular response to salicylic acid stimulus"/>
    <property type="evidence" value="ECO:0000270"/>
    <property type="project" value="UniProtKB"/>
</dbReference>
<dbReference type="GO" id="GO:0009617">
    <property type="term" value="P:response to bacterium"/>
    <property type="evidence" value="ECO:0000270"/>
    <property type="project" value="TAIR"/>
</dbReference>
<dbReference type="GO" id="GO:0009627">
    <property type="term" value="P:systemic acquired resistance"/>
    <property type="evidence" value="ECO:0000314"/>
    <property type="project" value="TAIR"/>
</dbReference>
<dbReference type="CDD" id="cd06899">
    <property type="entry name" value="lectin_legume_LecRK_Arcelin_ConA"/>
    <property type="match status" value="1"/>
</dbReference>
<dbReference type="FunFam" id="2.60.120.200:FF:000236">
    <property type="entry name" value="Legume lectin family protein"/>
    <property type="match status" value="1"/>
</dbReference>
<dbReference type="Gene3D" id="2.60.120.200">
    <property type="match status" value="1"/>
</dbReference>
<dbReference type="InterPro" id="IPR013320">
    <property type="entry name" value="ConA-like_dom_sf"/>
</dbReference>
<dbReference type="InterPro" id="IPR016363">
    <property type="entry name" value="L-lectin"/>
</dbReference>
<dbReference type="InterPro" id="IPR001220">
    <property type="entry name" value="Legume_lectin_dom"/>
</dbReference>
<dbReference type="InterPro" id="IPR050258">
    <property type="entry name" value="Leguminous_Lectin"/>
</dbReference>
<dbReference type="PANTHER" id="PTHR32401">
    <property type="entry name" value="CONCANAVALIN A-LIKE LECTIN FAMILY PROTEIN"/>
    <property type="match status" value="1"/>
</dbReference>
<dbReference type="PANTHER" id="PTHR32401:SF38">
    <property type="entry name" value="LECTIN-LIKE PROTEIN"/>
    <property type="match status" value="1"/>
</dbReference>
<dbReference type="Pfam" id="PF00139">
    <property type="entry name" value="Lectin_legB"/>
    <property type="match status" value="1"/>
</dbReference>
<dbReference type="PIRSF" id="PIRSF002690">
    <property type="entry name" value="L-type_lectin_plant"/>
    <property type="match status" value="1"/>
</dbReference>
<dbReference type="SUPFAM" id="SSF49899">
    <property type="entry name" value="Concanavalin A-like lectins/glucanases"/>
    <property type="match status" value="1"/>
</dbReference>